<comment type="function">
    <text evidence="1">Preferentially cleaves peptide bonds on the carboxyl-terminal side of aspartate and glutamate. Along with other extracellular proteases it is involved in colonization and infection of human tissues. Required for proteolytic maturation of thiol protease SspB and inactivation of SspC, an inhibitor of SspB. It is the most important protease for degradation of fibronectin-binding protein (FnBP) and surface protein A, which are involved in adherence to host cells. May also protect bacteria against host defense mechanism by cleaving the immunoglobulin classes IgG, IgA and IgM. May be involved in the stability of secreted lipases (By similarity).</text>
</comment>
<comment type="catalytic activity">
    <reaction evidence="3">
        <text>Preferential cleavage: Glu-|-Xaa, Asp-|-Xaa.</text>
        <dbReference type="EC" id="3.4.21.19"/>
    </reaction>
</comment>
<comment type="subcellular location">
    <subcellularLocation>
        <location evidence="1">Secreted</location>
    </subcellularLocation>
</comment>
<comment type="PTM">
    <text evidence="1">Proteolytically cleaved by aureolysin (aur). This cleavage leads to the activation of SspA (By similarity).</text>
</comment>
<comment type="miscellaneous">
    <text evidence="1">The cascade of activation of extracellular proteases proceeds from the metalloprotease aureolysin (aur), through SspA to SspB.</text>
</comment>
<comment type="similarity">
    <text evidence="5">Belongs to the peptidase S1B family.</text>
</comment>
<proteinExistence type="inferred from homology"/>
<sequence length="342" mass="36977">MKGKFLKVSSLFVATLTTATLVSSPAANALSSKAMDNHPQQTQSSKQQTPKIKKGGNLKPLEQREHANVILPNNDRHQITDTTNGHYAPVTYIQVEAPTGTFIASGVVVGKDTLLTNKHVVDATHGDPHALKAFPSAINQDNYPNGGFTAEQITKYSGEGDLAIVKFSPNEQNKHIGEVVKPATMSNNAETQVNQNITVTGYPGDKPVATMWESKGKITYLKGEAMQYDLSTTGGNSGSPVFNEKNEVIGIHWGGVPNEFNGAVFINENVRNFLKQNIEDIHFANDDQPNNPDNPDNPNNPDNPNNPDNPNNPDEPNNPDNPNNPDNPDNGDNNNSDNPDAA</sequence>
<feature type="signal peptide" evidence="2">
    <location>
        <begin position="1"/>
        <end position="29"/>
    </location>
</feature>
<feature type="propeptide" id="PRO_0000026888" evidence="1">
    <location>
        <begin position="30"/>
        <end position="68"/>
    </location>
</feature>
<feature type="chain" id="PRO_0000026889" description="Glutamyl endopeptidase">
    <location>
        <begin position="69"/>
        <end position="342"/>
    </location>
</feature>
<feature type="repeat" description="1">
    <location>
        <begin position="289"/>
        <end position="291"/>
    </location>
</feature>
<feature type="repeat" description="2">
    <location>
        <begin position="292"/>
        <end position="294"/>
    </location>
</feature>
<feature type="repeat" description="3">
    <location>
        <begin position="295"/>
        <end position="297"/>
    </location>
</feature>
<feature type="repeat" description="4">
    <location>
        <begin position="298"/>
        <end position="300"/>
    </location>
</feature>
<feature type="repeat" description="5">
    <location>
        <begin position="301"/>
        <end position="303"/>
    </location>
</feature>
<feature type="repeat" description="6">
    <location>
        <begin position="304"/>
        <end position="306"/>
    </location>
</feature>
<feature type="repeat" description="7">
    <location>
        <begin position="307"/>
        <end position="309"/>
    </location>
</feature>
<feature type="repeat" description="8">
    <location>
        <begin position="310"/>
        <end position="312"/>
    </location>
</feature>
<feature type="repeat" description="9">
    <location>
        <begin position="316"/>
        <end position="318"/>
    </location>
</feature>
<feature type="repeat" description="10">
    <location>
        <begin position="319"/>
        <end position="321"/>
    </location>
</feature>
<feature type="repeat" description="11">
    <location>
        <begin position="322"/>
        <end position="324"/>
    </location>
</feature>
<feature type="repeat" description="12">
    <location>
        <begin position="325"/>
        <end position="327"/>
    </location>
</feature>
<feature type="repeat" description="13">
    <location>
        <begin position="328"/>
        <end position="330"/>
    </location>
</feature>
<feature type="region of interest" description="Disordered" evidence="4">
    <location>
        <begin position="33"/>
        <end position="63"/>
    </location>
</feature>
<feature type="region of interest" description="Disordered" evidence="4">
    <location>
        <begin position="283"/>
        <end position="342"/>
    </location>
</feature>
<feature type="region of interest" description="13 X 3 AA repeats of P-[DN]-N">
    <location>
        <begin position="289"/>
        <end position="330"/>
    </location>
</feature>
<feature type="compositionally biased region" description="Low complexity" evidence="4">
    <location>
        <begin position="39"/>
        <end position="50"/>
    </location>
</feature>
<feature type="compositionally biased region" description="Low complexity" evidence="4">
    <location>
        <begin position="286"/>
        <end position="342"/>
    </location>
</feature>
<feature type="active site" description="Charge relay system" evidence="3">
    <location>
        <position position="119"/>
    </location>
</feature>
<feature type="active site" description="Charge relay system" evidence="3">
    <location>
        <position position="161"/>
    </location>
</feature>
<feature type="active site" description="Charge relay system" evidence="3">
    <location>
        <position position="237"/>
    </location>
</feature>
<feature type="site" description="Cleavage; by aureolysin" evidence="1">
    <location>
        <begin position="68"/>
        <end position="69"/>
    </location>
</feature>
<gene>
    <name type="primary">sspA</name>
    <name type="ordered locus">SA0901</name>
</gene>
<name>SSPA_STAAN</name>
<keyword id="KW-0378">Hydrolase</keyword>
<keyword id="KW-0645">Protease</keyword>
<keyword id="KW-0677">Repeat</keyword>
<keyword id="KW-0964">Secreted</keyword>
<keyword id="KW-0720">Serine protease</keyword>
<keyword id="KW-0732">Signal</keyword>
<keyword id="KW-0843">Virulence</keyword>
<keyword id="KW-0865">Zymogen</keyword>
<accession>Q7A6A6</accession>
<reference key="1">
    <citation type="journal article" date="2001" name="Lancet">
        <title>Whole genome sequencing of meticillin-resistant Staphylococcus aureus.</title>
        <authorList>
            <person name="Kuroda M."/>
            <person name="Ohta T."/>
            <person name="Uchiyama I."/>
            <person name="Baba T."/>
            <person name="Yuzawa H."/>
            <person name="Kobayashi I."/>
            <person name="Cui L."/>
            <person name="Oguchi A."/>
            <person name="Aoki K."/>
            <person name="Nagai Y."/>
            <person name="Lian J.-Q."/>
            <person name="Ito T."/>
            <person name="Kanamori M."/>
            <person name="Matsumaru H."/>
            <person name="Maruyama A."/>
            <person name="Murakami H."/>
            <person name="Hosoyama A."/>
            <person name="Mizutani-Ui Y."/>
            <person name="Takahashi N.K."/>
            <person name="Sawano T."/>
            <person name="Inoue R."/>
            <person name="Kaito C."/>
            <person name="Sekimizu K."/>
            <person name="Hirakawa H."/>
            <person name="Kuhara S."/>
            <person name="Goto S."/>
            <person name="Yabuzaki J."/>
            <person name="Kanehisa M."/>
            <person name="Yamashita A."/>
            <person name="Oshima K."/>
            <person name="Furuya K."/>
            <person name="Yoshino C."/>
            <person name="Shiba T."/>
            <person name="Hattori M."/>
            <person name="Ogasawara N."/>
            <person name="Hayashi H."/>
            <person name="Hiramatsu K."/>
        </authorList>
    </citation>
    <scope>NUCLEOTIDE SEQUENCE [LARGE SCALE GENOMIC DNA]</scope>
    <source>
        <strain>N315</strain>
    </source>
</reference>
<organism>
    <name type="scientific">Staphylococcus aureus (strain N315)</name>
    <dbReference type="NCBI Taxonomy" id="158879"/>
    <lineage>
        <taxon>Bacteria</taxon>
        <taxon>Bacillati</taxon>
        <taxon>Bacillota</taxon>
        <taxon>Bacilli</taxon>
        <taxon>Bacillales</taxon>
        <taxon>Staphylococcaceae</taxon>
        <taxon>Staphylococcus</taxon>
    </lineage>
</organism>
<protein>
    <recommendedName>
        <fullName>Glutamyl endopeptidase</fullName>
        <ecNumber>3.4.21.19</ecNumber>
    </recommendedName>
    <alternativeName>
        <fullName>Endoproteinase Glu-C</fullName>
    </alternativeName>
    <alternativeName>
        <fullName>Staphylococcal serine proteinase</fullName>
    </alternativeName>
    <alternativeName>
        <fullName>V8 protease</fullName>
    </alternativeName>
    <alternativeName>
        <fullName>V8 proteinase</fullName>
    </alternativeName>
</protein>
<evidence type="ECO:0000250" key="1"/>
<evidence type="ECO:0000255" key="2"/>
<evidence type="ECO:0000255" key="3">
    <source>
        <dbReference type="PROSITE-ProRule" id="PRU10083"/>
    </source>
</evidence>
<evidence type="ECO:0000256" key="4">
    <source>
        <dbReference type="SAM" id="MobiDB-lite"/>
    </source>
</evidence>
<evidence type="ECO:0000305" key="5"/>
<dbReference type="EC" id="3.4.21.19"/>
<dbReference type="EMBL" id="BA000018">
    <property type="protein sequence ID" value="BAB42146.1"/>
    <property type="molecule type" value="Genomic_DNA"/>
</dbReference>
<dbReference type="PIR" id="G89873">
    <property type="entry name" value="G89873"/>
</dbReference>
<dbReference type="RefSeq" id="WP_000676539.1">
    <property type="nucleotide sequence ID" value="NC_002745.2"/>
</dbReference>
<dbReference type="SMR" id="Q7A6A6"/>
<dbReference type="MEROPS" id="S01.269"/>
<dbReference type="EnsemblBacteria" id="BAB42146">
    <property type="protein sequence ID" value="BAB42146"/>
    <property type="gene ID" value="BAB42146"/>
</dbReference>
<dbReference type="KEGG" id="sau:SA0901"/>
<dbReference type="HOGENOM" id="CLU_073589_1_0_9"/>
<dbReference type="PRO" id="PR:Q7A6A6"/>
<dbReference type="GO" id="GO:0005576">
    <property type="term" value="C:extracellular region"/>
    <property type="evidence" value="ECO:0007669"/>
    <property type="project" value="UniProtKB-SubCell"/>
</dbReference>
<dbReference type="GO" id="GO:0004252">
    <property type="term" value="F:serine-type endopeptidase activity"/>
    <property type="evidence" value="ECO:0007669"/>
    <property type="project" value="InterPro"/>
</dbReference>
<dbReference type="GO" id="GO:0006508">
    <property type="term" value="P:proteolysis"/>
    <property type="evidence" value="ECO:0007669"/>
    <property type="project" value="UniProtKB-KW"/>
</dbReference>
<dbReference type="Gene3D" id="2.40.10.10">
    <property type="entry name" value="Trypsin-like serine proteases"/>
    <property type="match status" value="2"/>
</dbReference>
<dbReference type="InterPro" id="IPR050966">
    <property type="entry name" value="Glutamyl_endopeptidase"/>
</dbReference>
<dbReference type="InterPro" id="IPR009003">
    <property type="entry name" value="Peptidase_S1_PA"/>
</dbReference>
<dbReference type="InterPro" id="IPR043504">
    <property type="entry name" value="Peptidase_S1_PA_chymotrypsin"/>
</dbReference>
<dbReference type="InterPro" id="IPR008256">
    <property type="entry name" value="Peptidase_S1B"/>
</dbReference>
<dbReference type="InterPro" id="IPR008353">
    <property type="entry name" value="Peptidase_S1B_tx"/>
</dbReference>
<dbReference type="InterPro" id="IPR028301">
    <property type="entry name" value="V8_his_AS"/>
</dbReference>
<dbReference type="InterPro" id="IPR000126">
    <property type="entry name" value="V8_ser_AS"/>
</dbReference>
<dbReference type="PANTHER" id="PTHR15462">
    <property type="entry name" value="SERINE PROTEASE"/>
    <property type="match status" value="1"/>
</dbReference>
<dbReference type="PANTHER" id="PTHR15462:SF8">
    <property type="entry name" value="SERINE PROTEASE"/>
    <property type="match status" value="1"/>
</dbReference>
<dbReference type="Pfam" id="PF13365">
    <property type="entry name" value="Trypsin_2"/>
    <property type="match status" value="1"/>
</dbReference>
<dbReference type="PRINTS" id="PR01774">
    <property type="entry name" value="EXFOLTOXIN"/>
</dbReference>
<dbReference type="PRINTS" id="PR00839">
    <property type="entry name" value="V8PROTEASE"/>
</dbReference>
<dbReference type="SUPFAM" id="SSF50494">
    <property type="entry name" value="Trypsin-like serine proteases"/>
    <property type="match status" value="1"/>
</dbReference>
<dbReference type="PROSITE" id="PS00672">
    <property type="entry name" value="V8_HIS"/>
    <property type="match status" value="1"/>
</dbReference>
<dbReference type="PROSITE" id="PS00673">
    <property type="entry name" value="V8_SER"/>
    <property type="match status" value="1"/>
</dbReference>